<evidence type="ECO:0000255" key="1">
    <source>
        <dbReference type="HAMAP-Rule" id="MF_00620"/>
    </source>
</evidence>
<keyword id="KW-0238">DNA-binding</keyword>
<keyword id="KW-1185">Reference proteome</keyword>
<keyword id="KW-0804">Transcription</keyword>
<keyword id="KW-0805">Transcription regulation</keyword>
<gene>
    <name type="ordered locus">TK2151</name>
</gene>
<organism>
    <name type="scientific">Thermococcus kodakarensis (strain ATCC BAA-918 / JCM 12380 / KOD1)</name>
    <name type="common">Pyrococcus kodakaraensis (strain KOD1)</name>
    <dbReference type="NCBI Taxonomy" id="69014"/>
    <lineage>
        <taxon>Archaea</taxon>
        <taxon>Methanobacteriati</taxon>
        <taxon>Methanobacteriota</taxon>
        <taxon>Thermococci</taxon>
        <taxon>Thermococcales</taxon>
        <taxon>Thermococcaceae</taxon>
        <taxon>Thermococcus</taxon>
    </lineage>
</organism>
<protein>
    <recommendedName>
        <fullName evidence="1">Putative transcriptional regulatory protein TK2151</fullName>
    </recommendedName>
</protein>
<feature type="chain" id="PRO_0000144175" description="Putative transcriptional regulatory protein TK2151">
    <location>
        <begin position="1"/>
        <end position="151"/>
    </location>
</feature>
<proteinExistence type="inferred from homology"/>
<reference key="1">
    <citation type="journal article" date="2005" name="Genome Res.">
        <title>Complete genome sequence of the hyperthermophilic archaeon Thermococcus kodakaraensis KOD1 and comparison with Pyrococcus genomes.</title>
        <authorList>
            <person name="Fukui T."/>
            <person name="Atomi H."/>
            <person name="Kanai T."/>
            <person name="Matsumi R."/>
            <person name="Fujiwara S."/>
            <person name="Imanaka T."/>
        </authorList>
    </citation>
    <scope>NUCLEOTIDE SEQUENCE [LARGE SCALE GENOMIC DNA]</scope>
    <source>
        <strain>ATCC BAA-918 / JCM 12380 / KOD1</strain>
    </source>
</reference>
<sequence>MKSFLTEQQIRVLQLRAKGLKQSEIAEILGTSRANVSILERRALEKIEKARNTLLLWEQINSKISVEVKKGEDIFQVPEKLFKKADELGVKVPYSTAEIIAFLVEHAPIDDRLAKRDFTLFLDREDRLRVSECILEDFDEIGKHEGGKDTI</sequence>
<name>Y2151_THEKO</name>
<dbReference type="EMBL" id="AP006878">
    <property type="protein sequence ID" value="BAD86340.1"/>
    <property type="molecule type" value="Genomic_DNA"/>
</dbReference>
<dbReference type="RefSeq" id="WP_011251101.1">
    <property type="nucleotide sequence ID" value="NC_006624.1"/>
</dbReference>
<dbReference type="SMR" id="Q5JHH2"/>
<dbReference type="STRING" id="69014.TK2151"/>
<dbReference type="EnsemblBacteria" id="BAD86340">
    <property type="protein sequence ID" value="BAD86340"/>
    <property type="gene ID" value="TK2151"/>
</dbReference>
<dbReference type="GeneID" id="78448688"/>
<dbReference type="KEGG" id="tko:TK2151"/>
<dbReference type="eggNOG" id="arCOG04554">
    <property type="taxonomic scope" value="Archaea"/>
</dbReference>
<dbReference type="HOGENOM" id="CLU_125807_0_1_2"/>
<dbReference type="InParanoid" id="Q5JHH2"/>
<dbReference type="OrthoDB" id="17771at2157"/>
<dbReference type="PhylomeDB" id="Q5JHH2"/>
<dbReference type="Proteomes" id="UP000000536">
    <property type="component" value="Chromosome"/>
</dbReference>
<dbReference type="GO" id="GO:0003677">
    <property type="term" value="F:DNA binding"/>
    <property type="evidence" value="ECO:0007669"/>
    <property type="project" value="UniProtKB-KW"/>
</dbReference>
<dbReference type="GO" id="GO:0003700">
    <property type="term" value="F:DNA-binding transcription factor activity"/>
    <property type="evidence" value="ECO:0007669"/>
    <property type="project" value="UniProtKB-UniRule"/>
</dbReference>
<dbReference type="GO" id="GO:0006352">
    <property type="term" value="P:DNA-templated transcription initiation"/>
    <property type="evidence" value="ECO:0007669"/>
    <property type="project" value="InterPro"/>
</dbReference>
<dbReference type="Gene3D" id="3.30.1190.10">
    <property type="entry name" value="DNA-binding protein Tfx superfamily, archaea"/>
    <property type="match status" value="1"/>
</dbReference>
<dbReference type="HAMAP" id="MF_00620">
    <property type="entry name" value="HTH_type_Tfx"/>
    <property type="match status" value="1"/>
</dbReference>
<dbReference type="InterPro" id="IPR007630">
    <property type="entry name" value="RNA_pol_sigma70_r4"/>
</dbReference>
<dbReference type="InterPro" id="IPR029291">
    <property type="entry name" value="Tfx_C"/>
</dbReference>
<dbReference type="InterPro" id="IPR004645">
    <property type="entry name" value="Tfx_DNA-bd_arc"/>
</dbReference>
<dbReference type="InterPro" id="IPR018384">
    <property type="entry name" value="Tfx_DNA-bd_euryarc"/>
</dbReference>
<dbReference type="InterPro" id="IPR036657">
    <property type="entry name" value="Tfx_DNA-bd_sf_arc"/>
</dbReference>
<dbReference type="InterPro" id="IPR000792">
    <property type="entry name" value="Tscrpt_reg_LuxR_C"/>
</dbReference>
<dbReference type="NCBIfam" id="NF003055">
    <property type="entry name" value="PRK03975.1-2"/>
    <property type="match status" value="1"/>
</dbReference>
<dbReference type="NCBIfam" id="NF003056">
    <property type="entry name" value="PRK03975.1-4"/>
    <property type="match status" value="1"/>
</dbReference>
<dbReference type="NCBIfam" id="TIGR00721">
    <property type="entry name" value="tfx"/>
    <property type="match status" value="1"/>
</dbReference>
<dbReference type="Pfam" id="PF04545">
    <property type="entry name" value="Sigma70_r4"/>
    <property type="match status" value="1"/>
</dbReference>
<dbReference type="Pfam" id="PF14601">
    <property type="entry name" value="TFX_C"/>
    <property type="match status" value="1"/>
</dbReference>
<dbReference type="PIRSF" id="PIRSF004932">
    <property type="entry name" value="DNA_bind_Tfx"/>
    <property type="match status" value="1"/>
</dbReference>
<dbReference type="SMART" id="SM00421">
    <property type="entry name" value="HTH_LUXR"/>
    <property type="match status" value="1"/>
</dbReference>
<dbReference type="SUPFAM" id="SSF89915">
    <property type="entry name" value="DNA-binding protein Tfx"/>
    <property type="match status" value="1"/>
</dbReference>
<accession>Q5JHH2</accession>
<comment type="function">
    <text evidence="1">Putative transcriptional regulator.</text>
</comment>
<comment type="similarity">
    <text evidence="1">Belongs to the Tfx family.</text>
</comment>